<sequence length="155" mass="17225">MAEAAQQDAQQNFAIQRIFLKDVSFEAPNSPDMFQKEWNPDVKLDLDTQSRELGEGVYEVILRLTVTVKNAEDTAFLCEVQQGGIFSASEMEAGQLAHCLGAFCPNILFPYARETISSLVVKGTFPQLNLAPVNFDALFMNYLQNQAQQAEGEQA</sequence>
<feature type="chain" id="PRO_1000148712" description="Protein-export protein SecB">
    <location>
        <begin position="1"/>
        <end position="155"/>
    </location>
</feature>
<evidence type="ECO:0000255" key="1">
    <source>
        <dbReference type="HAMAP-Rule" id="MF_00821"/>
    </source>
</evidence>
<reference key="1">
    <citation type="submission" date="2009-02" db="EMBL/GenBank/DDBJ databases">
        <title>Vibrio splendidus str. LGP32 complete genome.</title>
        <authorList>
            <person name="Mazel D."/>
            <person name="Le Roux F."/>
        </authorList>
    </citation>
    <scope>NUCLEOTIDE SEQUENCE [LARGE SCALE GENOMIC DNA]</scope>
    <source>
        <strain>LGP32</strain>
    </source>
</reference>
<protein>
    <recommendedName>
        <fullName evidence="1">Protein-export protein SecB</fullName>
    </recommendedName>
</protein>
<organism>
    <name type="scientific">Vibrio atlanticus (strain LGP32)</name>
    <name type="common">Vibrio splendidus (strain Mel32)</name>
    <dbReference type="NCBI Taxonomy" id="575788"/>
    <lineage>
        <taxon>Bacteria</taxon>
        <taxon>Pseudomonadati</taxon>
        <taxon>Pseudomonadota</taxon>
        <taxon>Gammaproteobacteria</taxon>
        <taxon>Vibrionales</taxon>
        <taxon>Vibrionaceae</taxon>
        <taxon>Vibrio</taxon>
    </lineage>
</organism>
<proteinExistence type="inferred from homology"/>
<accession>B7VHM6</accession>
<name>SECB_VIBA3</name>
<dbReference type="EMBL" id="FM954972">
    <property type="protein sequence ID" value="CAV17238.1"/>
    <property type="molecule type" value="Genomic_DNA"/>
</dbReference>
<dbReference type="SMR" id="B7VHM6"/>
<dbReference type="STRING" id="575788.VS_0206"/>
<dbReference type="KEGG" id="vsp:VS_0206"/>
<dbReference type="eggNOG" id="COG1952">
    <property type="taxonomic scope" value="Bacteria"/>
</dbReference>
<dbReference type="HOGENOM" id="CLU_111574_1_0_6"/>
<dbReference type="Proteomes" id="UP000009100">
    <property type="component" value="Chromosome 1"/>
</dbReference>
<dbReference type="GO" id="GO:0005737">
    <property type="term" value="C:cytoplasm"/>
    <property type="evidence" value="ECO:0007669"/>
    <property type="project" value="UniProtKB-SubCell"/>
</dbReference>
<dbReference type="GO" id="GO:0051082">
    <property type="term" value="F:unfolded protein binding"/>
    <property type="evidence" value="ECO:0007669"/>
    <property type="project" value="InterPro"/>
</dbReference>
<dbReference type="GO" id="GO:0006457">
    <property type="term" value="P:protein folding"/>
    <property type="evidence" value="ECO:0007669"/>
    <property type="project" value="UniProtKB-UniRule"/>
</dbReference>
<dbReference type="GO" id="GO:0051262">
    <property type="term" value="P:protein tetramerization"/>
    <property type="evidence" value="ECO:0007669"/>
    <property type="project" value="InterPro"/>
</dbReference>
<dbReference type="GO" id="GO:0015031">
    <property type="term" value="P:protein transport"/>
    <property type="evidence" value="ECO:0007669"/>
    <property type="project" value="UniProtKB-UniRule"/>
</dbReference>
<dbReference type="Gene3D" id="3.10.420.10">
    <property type="entry name" value="SecB-like"/>
    <property type="match status" value="1"/>
</dbReference>
<dbReference type="HAMAP" id="MF_00821">
    <property type="entry name" value="SecB"/>
    <property type="match status" value="1"/>
</dbReference>
<dbReference type="InterPro" id="IPR003708">
    <property type="entry name" value="SecB"/>
</dbReference>
<dbReference type="InterPro" id="IPR035958">
    <property type="entry name" value="SecB-like_sf"/>
</dbReference>
<dbReference type="NCBIfam" id="NF004393">
    <property type="entry name" value="PRK05751.1-4"/>
    <property type="match status" value="1"/>
</dbReference>
<dbReference type="NCBIfam" id="TIGR00809">
    <property type="entry name" value="secB"/>
    <property type="match status" value="1"/>
</dbReference>
<dbReference type="PANTHER" id="PTHR36918">
    <property type="match status" value="1"/>
</dbReference>
<dbReference type="PANTHER" id="PTHR36918:SF1">
    <property type="entry name" value="PROTEIN-EXPORT PROTEIN SECB"/>
    <property type="match status" value="1"/>
</dbReference>
<dbReference type="Pfam" id="PF02556">
    <property type="entry name" value="SecB"/>
    <property type="match status" value="1"/>
</dbReference>
<dbReference type="PRINTS" id="PR01594">
    <property type="entry name" value="SECBCHAPRONE"/>
</dbReference>
<dbReference type="SUPFAM" id="SSF54611">
    <property type="entry name" value="SecB-like"/>
    <property type="match status" value="1"/>
</dbReference>
<keyword id="KW-0143">Chaperone</keyword>
<keyword id="KW-0963">Cytoplasm</keyword>
<keyword id="KW-0653">Protein transport</keyword>
<keyword id="KW-0811">Translocation</keyword>
<keyword id="KW-0813">Transport</keyword>
<gene>
    <name evidence="1" type="primary">secB</name>
    <name type="ordered locus">VS_0206</name>
</gene>
<comment type="function">
    <text evidence="1">One of the proteins required for the normal export of preproteins out of the cell cytoplasm. It is a molecular chaperone that binds to a subset of precursor proteins, maintaining them in a translocation-competent state. It also specifically binds to its receptor SecA.</text>
</comment>
<comment type="subunit">
    <text evidence="1">Homotetramer, a dimer of dimers. One homotetramer interacts with 1 SecA dimer.</text>
</comment>
<comment type="subcellular location">
    <subcellularLocation>
        <location evidence="1">Cytoplasm</location>
    </subcellularLocation>
</comment>
<comment type="similarity">
    <text evidence="1">Belongs to the SecB family.</text>
</comment>